<proteinExistence type="inferred from homology"/>
<keyword id="KW-1003">Cell membrane</keyword>
<keyword id="KW-0966">Cell projection</keyword>
<keyword id="KW-0963">Cytoplasm</keyword>
<keyword id="KW-0472">Membrane</keyword>
<keyword id="KW-0539">Nucleus</keyword>
<keyword id="KW-0597">Phosphoprotein</keyword>
<keyword id="KW-1185">Reference proteome</keyword>
<protein>
    <recommendedName>
        <fullName evidence="1">Protein king tubby</fullName>
    </recommendedName>
</protein>
<gene>
    <name evidence="1" type="primary">king-tubby</name>
    <name type="ORF">GM15805</name>
</gene>
<organism>
    <name type="scientific">Drosophila sechellia</name>
    <name type="common">Fruit fly</name>
    <dbReference type="NCBI Taxonomy" id="7238"/>
    <lineage>
        <taxon>Eukaryota</taxon>
        <taxon>Metazoa</taxon>
        <taxon>Ecdysozoa</taxon>
        <taxon>Arthropoda</taxon>
        <taxon>Hexapoda</taxon>
        <taxon>Insecta</taxon>
        <taxon>Pterygota</taxon>
        <taxon>Neoptera</taxon>
        <taxon>Endopterygota</taxon>
        <taxon>Diptera</taxon>
        <taxon>Brachycera</taxon>
        <taxon>Muscomorpha</taxon>
        <taxon>Ephydroidea</taxon>
        <taxon>Drosophilidae</taxon>
        <taxon>Drosophila</taxon>
        <taxon>Sophophora</taxon>
    </lineage>
</organism>
<accession>B4I7J9</accession>
<dbReference type="EMBL" id="CH480824">
    <property type="protein sequence ID" value="EDW56574.1"/>
    <property type="molecule type" value="Genomic_DNA"/>
</dbReference>
<dbReference type="RefSeq" id="XP_002039709.1">
    <property type="nucleotide sequence ID" value="XM_002039673.1"/>
</dbReference>
<dbReference type="SMR" id="B4I7J9"/>
<dbReference type="STRING" id="7238.B4I7J9"/>
<dbReference type="EnsemblMetazoa" id="FBtr0198790">
    <property type="protein sequence ID" value="FBpp0197282"/>
    <property type="gene ID" value="FBgn0170721"/>
</dbReference>
<dbReference type="EnsemblMetazoa" id="XM_002039673.2">
    <property type="protein sequence ID" value="XP_002039709.2"/>
    <property type="gene ID" value="LOC6615305"/>
</dbReference>
<dbReference type="GeneID" id="6615305"/>
<dbReference type="KEGG" id="dse:6615305"/>
<dbReference type="CTD" id="37400"/>
<dbReference type="HOGENOM" id="CLU_028236_1_1_1"/>
<dbReference type="OMA" id="GYDGPMQ"/>
<dbReference type="PhylomeDB" id="B4I7J9"/>
<dbReference type="ChiTaRS" id="ktub">
    <property type="organism name" value="fly"/>
</dbReference>
<dbReference type="Proteomes" id="UP000001292">
    <property type="component" value="Unassembled WGS sequence"/>
</dbReference>
<dbReference type="GO" id="GO:0060170">
    <property type="term" value="C:ciliary membrane"/>
    <property type="evidence" value="ECO:0007669"/>
    <property type="project" value="UniProtKB-SubCell"/>
</dbReference>
<dbReference type="GO" id="GO:0005737">
    <property type="term" value="C:cytoplasm"/>
    <property type="evidence" value="ECO:0000250"/>
    <property type="project" value="UniProtKB"/>
</dbReference>
<dbReference type="GO" id="GO:0005634">
    <property type="term" value="C:nucleus"/>
    <property type="evidence" value="ECO:0000250"/>
    <property type="project" value="UniProtKB"/>
</dbReference>
<dbReference type="GO" id="GO:0016028">
    <property type="term" value="C:rhabdomere"/>
    <property type="evidence" value="ECO:0007669"/>
    <property type="project" value="UniProtKB-SubCell"/>
</dbReference>
<dbReference type="GO" id="GO:0061512">
    <property type="term" value="P:protein localization to cilium"/>
    <property type="evidence" value="ECO:0007669"/>
    <property type="project" value="TreeGrafter"/>
</dbReference>
<dbReference type="FunFam" id="3.20.90.10:FF:000001">
    <property type="entry name" value="Tubby-like protein"/>
    <property type="match status" value="1"/>
</dbReference>
<dbReference type="Gene3D" id="3.20.90.10">
    <property type="entry name" value="Tubby Protein, Chain A"/>
    <property type="match status" value="1"/>
</dbReference>
<dbReference type="InterPro" id="IPR025659">
    <property type="entry name" value="Tubby-like_C"/>
</dbReference>
<dbReference type="InterPro" id="IPR000007">
    <property type="entry name" value="Tubby_C"/>
</dbReference>
<dbReference type="InterPro" id="IPR018066">
    <property type="entry name" value="Tubby_C_CS"/>
</dbReference>
<dbReference type="PANTHER" id="PTHR16517:SF7">
    <property type="entry name" value="PROTEIN KING TUBBY"/>
    <property type="match status" value="1"/>
</dbReference>
<dbReference type="PANTHER" id="PTHR16517">
    <property type="entry name" value="TUBBY-RELATED"/>
    <property type="match status" value="1"/>
</dbReference>
<dbReference type="Pfam" id="PF01167">
    <property type="entry name" value="Tub"/>
    <property type="match status" value="1"/>
</dbReference>
<dbReference type="PRINTS" id="PR01573">
    <property type="entry name" value="SUPERTUBBY"/>
</dbReference>
<dbReference type="SUPFAM" id="SSF54518">
    <property type="entry name" value="Tubby C-terminal domain-like"/>
    <property type="match status" value="1"/>
</dbReference>
<dbReference type="PROSITE" id="PS01200">
    <property type="entry name" value="TUB_1"/>
    <property type="match status" value="1"/>
</dbReference>
<dbReference type="PROSITE" id="PS01201">
    <property type="entry name" value="TUB_2"/>
    <property type="match status" value="1"/>
</dbReference>
<reference evidence="4" key="1">
    <citation type="journal article" date="2007" name="Nature">
        <title>Evolution of genes and genomes on the Drosophila phylogeny.</title>
        <authorList>
            <consortium name="Drosophila 12 genomes consortium"/>
        </authorList>
    </citation>
    <scope>NUCLEOTIDE SEQUENCE [LARGE SCALE GENOMIC DNA]</scope>
    <source>
        <strain evidence="4">Rob3c / Tucson 14021-0248.25</strain>
    </source>
</reference>
<sequence>MEAYIRQKRASPGMVQASDLQINRPMSGMRSNSRELHAYDGPMQFISSPQNPDQILTNGSPGGINSVAMNTSRNHSNNMRSLSTINQEADLIEEISSHELEDEESSPVTVIEQQQQSASHSANSTQSQKPRARQHSFSDNLDEDDYTNRNVAGAAPVRPAGMASSPYKDATLDGSSNGTGNGTGGESEGDVIGNIDQFVMQPAPQGVLYKCRITRDRKGMDRGLFPIYYLHLERDYGKKIFLLGGRKRKKSKTSNYIVSCDPTDLSRNADGFCGKLRSNVFGTSFTVFDNGNKESTESPRLDLAVIIYDTNILGFKGPRNMTVILPGMTEDDQRVKISSADPKQQGILDLWKMKNMDNIVELHNKTPVWNDETQSYVLNFHGRVTQASVKNFQLVHDSDPEYIVMQFGRTSEDVFTMDYRYPLCAMQAFAIALSSFDGKIACE</sequence>
<comment type="subcellular location">
    <subcellularLocation>
        <location evidence="1">Cytoplasm</location>
    </subcellularLocation>
    <subcellularLocation>
        <location evidence="1">Nucleus</location>
    </subcellularLocation>
    <subcellularLocation>
        <location evidence="1">Cell projection</location>
        <location evidence="1">Cilium membrane</location>
        <topology evidence="1">Peripheral membrane protein</topology>
    </subcellularLocation>
    <subcellularLocation>
        <location evidence="1">Cell projection</location>
        <location evidence="1">Rhabdomere</location>
    </subcellularLocation>
</comment>
<comment type="similarity">
    <text evidence="2">Belongs to the TUB family.</text>
</comment>
<evidence type="ECO:0000250" key="1">
    <source>
        <dbReference type="UniProtKB" id="Q86PC9"/>
    </source>
</evidence>
<evidence type="ECO:0000255" key="2"/>
<evidence type="ECO:0000256" key="3">
    <source>
        <dbReference type="SAM" id="MobiDB-lite"/>
    </source>
</evidence>
<evidence type="ECO:0000312" key="4">
    <source>
        <dbReference type="EMBL" id="EDW56574.1"/>
    </source>
</evidence>
<feature type="chain" id="PRO_0000400842" description="Protein king tubby">
    <location>
        <begin position="1"/>
        <end position="443"/>
    </location>
</feature>
<feature type="region of interest" description="Disordered" evidence="3">
    <location>
        <begin position="57"/>
        <end position="80"/>
    </location>
</feature>
<feature type="region of interest" description="Disordered" evidence="3">
    <location>
        <begin position="98"/>
        <end position="191"/>
    </location>
</feature>
<feature type="compositionally biased region" description="Polar residues" evidence="3">
    <location>
        <begin position="67"/>
        <end position="80"/>
    </location>
</feature>
<feature type="compositionally biased region" description="Low complexity" evidence="3">
    <location>
        <begin position="113"/>
        <end position="128"/>
    </location>
</feature>
<feature type="compositionally biased region" description="Gly residues" evidence="3">
    <location>
        <begin position="177"/>
        <end position="186"/>
    </location>
</feature>
<feature type="modified residue" description="Phosphoserine" evidence="1">
    <location>
        <position position="136"/>
    </location>
</feature>
<name>TULP_DROSE</name>